<protein>
    <recommendedName>
        <fullName evidence="5">Calcium-binding protein KRP1</fullName>
    </recommendedName>
    <alternativeName>
        <fullName evidence="4">KIC-related protein 1</fullName>
    </alternativeName>
</protein>
<feature type="chain" id="PRO_0000443736" description="Calcium-binding protein KRP1">
    <location>
        <begin position="1"/>
        <end position="130"/>
    </location>
</feature>
<feature type="domain" description="EF-hand" evidence="1">
    <location>
        <begin position="72"/>
        <end position="107"/>
    </location>
</feature>
<feature type="binding site" evidence="1">
    <location>
        <position position="85"/>
    </location>
    <ligand>
        <name>Ca(2+)</name>
        <dbReference type="ChEBI" id="CHEBI:29108"/>
    </ligand>
</feature>
<feature type="binding site" evidence="1">
    <location>
        <position position="87"/>
    </location>
    <ligand>
        <name>Ca(2+)</name>
        <dbReference type="ChEBI" id="CHEBI:29108"/>
    </ligand>
</feature>
<feature type="binding site" evidence="1">
    <location>
        <position position="89"/>
    </location>
    <ligand>
        <name>Ca(2+)</name>
        <dbReference type="ChEBI" id="CHEBI:29108"/>
    </ligand>
</feature>
<feature type="binding site" evidence="1">
    <location>
        <position position="96"/>
    </location>
    <ligand>
        <name>Ca(2+)</name>
        <dbReference type="ChEBI" id="CHEBI:29108"/>
    </ligand>
</feature>
<reference key="1">
    <citation type="journal article" date="2004" name="Plant Cell">
        <title>KIC, a novel Ca2+ binding protein with one EF-hand motif, interacts with a microtubule motor protein and regulates trichome morphogenesis.</title>
        <authorList>
            <person name="Reddy V.S."/>
            <person name="Day I.S."/>
            <person name="Thomas T."/>
            <person name="Reddy A.S.N."/>
        </authorList>
    </citation>
    <scope>NUCLEOTIDE SEQUENCE [MRNA]</scope>
    <scope>FUNCTION</scope>
</reference>
<reference key="2">
    <citation type="journal article" date="1999" name="Nature">
        <title>Sequence and analysis of chromosome 4 of the plant Arabidopsis thaliana.</title>
        <authorList>
            <person name="Mayer K.F.X."/>
            <person name="Schueller C."/>
            <person name="Wambutt R."/>
            <person name="Murphy G."/>
            <person name="Volckaert G."/>
            <person name="Pohl T."/>
            <person name="Duesterhoeft A."/>
            <person name="Stiekema W."/>
            <person name="Entian K.-D."/>
            <person name="Terryn N."/>
            <person name="Harris B."/>
            <person name="Ansorge W."/>
            <person name="Brandt P."/>
            <person name="Grivell L.A."/>
            <person name="Rieger M."/>
            <person name="Weichselgartner M."/>
            <person name="de Simone V."/>
            <person name="Obermaier B."/>
            <person name="Mache R."/>
            <person name="Mueller M."/>
            <person name="Kreis M."/>
            <person name="Delseny M."/>
            <person name="Puigdomenech P."/>
            <person name="Watson M."/>
            <person name="Schmidtheini T."/>
            <person name="Reichert B."/>
            <person name="Portetelle D."/>
            <person name="Perez-Alonso M."/>
            <person name="Boutry M."/>
            <person name="Bancroft I."/>
            <person name="Vos P."/>
            <person name="Hoheisel J."/>
            <person name="Zimmermann W."/>
            <person name="Wedler H."/>
            <person name="Ridley P."/>
            <person name="Langham S.-A."/>
            <person name="McCullagh B."/>
            <person name="Bilham L."/>
            <person name="Robben J."/>
            <person name="van der Schueren J."/>
            <person name="Grymonprez B."/>
            <person name="Chuang Y.-J."/>
            <person name="Vandenbussche F."/>
            <person name="Braeken M."/>
            <person name="Weltjens I."/>
            <person name="Voet M."/>
            <person name="Bastiaens I."/>
            <person name="Aert R."/>
            <person name="Defoor E."/>
            <person name="Weitzenegger T."/>
            <person name="Bothe G."/>
            <person name="Ramsperger U."/>
            <person name="Hilbert H."/>
            <person name="Braun M."/>
            <person name="Holzer E."/>
            <person name="Brandt A."/>
            <person name="Peters S."/>
            <person name="van Staveren M."/>
            <person name="Dirkse W."/>
            <person name="Mooijman P."/>
            <person name="Klein Lankhorst R."/>
            <person name="Rose M."/>
            <person name="Hauf J."/>
            <person name="Koetter P."/>
            <person name="Berneiser S."/>
            <person name="Hempel S."/>
            <person name="Feldpausch M."/>
            <person name="Lamberth S."/>
            <person name="Van den Daele H."/>
            <person name="De Keyser A."/>
            <person name="Buysshaert C."/>
            <person name="Gielen J."/>
            <person name="Villarroel R."/>
            <person name="De Clercq R."/>
            <person name="van Montagu M."/>
            <person name="Rogers J."/>
            <person name="Cronin A."/>
            <person name="Quail M.A."/>
            <person name="Bray-Allen S."/>
            <person name="Clark L."/>
            <person name="Doggett J."/>
            <person name="Hall S."/>
            <person name="Kay M."/>
            <person name="Lennard N."/>
            <person name="McLay K."/>
            <person name="Mayes R."/>
            <person name="Pettett A."/>
            <person name="Rajandream M.A."/>
            <person name="Lyne M."/>
            <person name="Benes V."/>
            <person name="Rechmann S."/>
            <person name="Borkova D."/>
            <person name="Bloecker H."/>
            <person name="Scharfe M."/>
            <person name="Grimm M."/>
            <person name="Loehnert T.-H."/>
            <person name="Dose S."/>
            <person name="de Haan M."/>
            <person name="Maarse A.C."/>
            <person name="Schaefer M."/>
            <person name="Mueller-Auer S."/>
            <person name="Gabel C."/>
            <person name="Fuchs M."/>
            <person name="Fartmann B."/>
            <person name="Granderath K."/>
            <person name="Dauner D."/>
            <person name="Herzl A."/>
            <person name="Neumann S."/>
            <person name="Argiriou A."/>
            <person name="Vitale D."/>
            <person name="Liguori R."/>
            <person name="Piravandi E."/>
            <person name="Massenet O."/>
            <person name="Quigley F."/>
            <person name="Clabauld G."/>
            <person name="Muendlein A."/>
            <person name="Felber R."/>
            <person name="Schnabl S."/>
            <person name="Hiller R."/>
            <person name="Schmidt W."/>
            <person name="Lecharny A."/>
            <person name="Aubourg S."/>
            <person name="Chefdor F."/>
            <person name="Cooke R."/>
            <person name="Berger C."/>
            <person name="Monfort A."/>
            <person name="Casacuberta E."/>
            <person name="Gibbons T."/>
            <person name="Weber N."/>
            <person name="Vandenbol M."/>
            <person name="Bargues M."/>
            <person name="Terol J."/>
            <person name="Torres A."/>
            <person name="Perez-Perez A."/>
            <person name="Purnelle B."/>
            <person name="Bent E."/>
            <person name="Johnson S."/>
            <person name="Tacon D."/>
            <person name="Jesse T."/>
            <person name="Heijnen L."/>
            <person name="Schwarz S."/>
            <person name="Scholler P."/>
            <person name="Heber S."/>
            <person name="Francs P."/>
            <person name="Bielke C."/>
            <person name="Frishman D."/>
            <person name="Haase D."/>
            <person name="Lemcke K."/>
            <person name="Mewes H.-W."/>
            <person name="Stocker S."/>
            <person name="Zaccaria P."/>
            <person name="Bevan M."/>
            <person name="Wilson R.K."/>
            <person name="de la Bastide M."/>
            <person name="Habermann K."/>
            <person name="Parnell L."/>
            <person name="Dedhia N."/>
            <person name="Gnoj L."/>
            <person name="Schutz K."/>
            <person name="Huang E."/>
            <person name="Spiegel L."/>
            <person name="Sekhon M."/>
            <person name="Murray J."/>
            <person name="Sheet P."/>
            <person name="Cordes M."/>
            <person name="Abu-Threideh J."/>
            <person name="Stoneking T."/>
            <person name="Kalicki J."/>
            <person name="Graves T."/>
            <person name="Harmon G."/>
            <person name="Edwards J."/>
            <person name="Latreille P."/>
            <person name="Courtney L."/>
            <person name="Cloud J."/>
            <person name="Abbott A."/>
            <person name="Scott K."/>
            <person name="Johnson D."/>
            <person name="Minx P."/>
            <person name="Bentley D."/>
            <person name="Fulton B."/>
            <person name="Miller N."/>
            <person name="Greco T."/>
            <person name="Kemp K."/>
            <person name="Kramer J."/>
            <person name="Fulton L."/>
            <person name="Mardis E."/>
            <person name="Dante M."/>
            <person name="Pepin K."/>
            <person name="Hillier L.W."/>
            <person name="Nelson J."/>
            <person name="Spieth J."/>
            <person name="Ryan E."/>
            <person name="Andrews S."/>
            <person name="Geisel C."/>
            <person name="Layman D."/>
            <person name="Du H."/>
            <person name="Ali J."/>
            <person name="Berghoff A."/>
            <person name="Jones K."/>
            <person name="Drone K."/>
            <person name="Cotton M."/>
            <person name="Joshu C."/>
            <person name="Antonoiu B."/>
            <person name="Zidanic M."/>
            <person name="Strong C."/>
            <person name="Sun H."/>
            <person name="Lamar B."/>
            <person name="Yordan C."/>
            <person name="Ma P."/>
            <person name="Zhong J."/>
            <person name="Preston R."/>
            <person name="Vil D."/>
            <person name="Shekher M."/>
            <person name="Matero A."/>
            <person name="Shah R."/>
            <person name="Swaby I.K."/>
            <person name="O'Shaughnessy A."/>
            <person name="Rodriguez M."/>
            <person name="Hoffman J."/>
            <person name="Till S."/>
            <person name="Granat S."/>
            <person name="Shohdy N."/>
            <person name="Hasegawa A."/>
            <person name="Hameed A."/>
            <person name="Lodhi M."/>
            <person name="Johnson A."/>
            <person name="Chen E."/>
            <person name="Marra M.A."/>
            <person name="Martienssen R."/>
            <person name="McCombie W.R."/>
        </authorList>
    </citation>
    <scope>NUCLEOTIDE SEQUENCE [LARGE SCALE GENOMIC DNA]</scope>
    <source>
        <strain>cv. Columbia</strain>
    </source>
</reference>
<reference key="3">
    <citation type="journal article" date="2017" name="Plant J.">
        <title>Araport11: a complete reannotation of the Arabidopsis thaliana reference genome.</title>
        <authorList>
            <person name="Cheng C.Y."/>
            <person name="Krishnakumar V."/>
            <person name="Chan A.P."/>
            <person name="Thibaud-Nissen F."/>
            <person name="Schobel S."/>
            <person name="Town C.D."/>
        </authorList>
    </citation>
    <scope>GENOME REANNOTATION</scope>
    <source>
        <strain>cv. Columbia</strain>
    </source>
</reference>
<reference key="4">
    <citation type="journal article" date="2003" name="Science">
        <title>Empirical analysis of transcriptional activity in the Arabidopsis genome.</title>
        <authorList>
            <person name="Yamada K."/>
            <person name="Lim J."/>
            <person name="Dale J.M."/>
            <person name="Chen H."/>
            <person name="Shinn P."/>
            <person name="Palm C.J."/>
            <person name="Southwick A.M."/>
            <person name="Wu H.C."/>
            <person name="Kim C.J."/>
            <person name="Nguyen M."/>
            <person name="Pham P.K."/>
            <person name="Cheuk R.F."/>
            <person name="Karlin-Newmann G."/>
            <person name="Liu S.X."/>
            <person name="Lam B."/>
            <person name="Sakano H."/>
            <person name="Wu T."/>
            <person name="Yu G."/>
            <person name="Miranda M."/>
            <person name="Quach H.L."/>
            <person name="Tripp M."/>
            <person name="Chang C.H."/>
            <person name="Lee J.M."/>
            <person name="Toriumi M.J."/>
            <person name="Chan M.M."/>
            <person name="Tang C.C."/>
            <person name="Onodera C.S."/>
            <person name="Deng J.M."/>
            <person name="Akiyama K."/>
            <person name="Ansari Y."/>
            <person name="Arakawa T."/>
            <person name="Banh J."/>
            <person name="Banno F."/>
            <person name="Bowser L."/>
            <person name="Brooks S.Y."/>
            <person name="Carninci P."/>
            <person name="Chao Q."/>
            <person name="Choy N."/>
            <person name="Enju A."/>
            <person name="Goldsmith A.D."/>
            <person name="Gurjal M."/>
            <person name="Hansen N.F."/>
            <person name="Hayashizaki Y."/>
            <person name="Johnson-Hopson C."/>
            <person name="Hsuan V.W."/>
            <person name="Iida K."/>
            <person name="Karnes M."/>
            <person name="Khan S."/>
            <person name="Koesema E."/>
            <person name="Ishida J."/>
            <person name="Jiang P.X."/>
            <person name="Jones T."/>
            <person name="Kawai J."/>
            <person name="Kamiya A."/>
            <person name="Meyers C."/>
            <person name="Nakajima M."/>
            <person name="Narusaka M."/>
            <person name="Seki M."/>
            <person name="Sakurai T."/>
            <person name="Satou M."/>
            <person name="Tamse R."/>
            <person name="Vaysberg M."/>
            <person name="Wallender E.K."/>
            <person name="Wong C."/>
            <person name="Yamamura Y."/>
            <person name="Yuan S."/>
            <person name="Shinozaki K."/>
            <person name="Davis R.W."/>
            <person name="Theologis A."/>
            <person name="Ecker J.R."/>
        </authorList>
    </citation>
    <scope>NUCLEOTIDE SEQUENCE [LARGE SCALE MRNA]</scope>
    <source>
        <strain>cv. Columbia</strain>
    </source>
</reference>
<reference key="5">
    <citation type="submission" date="2002-03" db="EMBL/GenBank/DDBJ databases">
        <title>Full-length cDNA from Arabidopsis thaliana.</title>
        <authorList>
            <person name="Brover V.V."/>
            <person name="Troukhan M.E."/>
            <person name="Alexandrov N.A."/>
            <person name="Lu Y.-P."/>
            <person name="Flavell R.B."/>
            <person name="Feldmann K.A."/>
        </authorList>
    </citation>
    <scope>NUCLEOTIDE SEQUENCE [LARGE SCALE MRNA]</scope>
</reference>
<reference key="6">
    <citation type="journal article" date="2007" name="Plant J.">
        <title>The SWI/SNF chromatin-remodeling gene AtCHR12 mediates temporary growth arrest in Arabidopsis thaliana upon perceiving environmental stress.</title>
        <authorList>
            <person name="Mlynarova L."/>
            <person name="Nap J.-P."/>
            <person name="Bisseling T."/>
        </authorList>
    </citation>
    <scope>INDUCTION BY CHR12</scope>
</reference>
<keyword id="KW-0106">Calcium</keyword>
<keyword id="KW-0479">Metal-binding</keyword>
<keyword id="KW-1185">Reference proteome</keyword>
<comment type="function">
    <text evidence="2">Potential calcium sensor that binds calcium in vitro.</text>
</comment>
<comment type="induction">
    <text evidence="3">By CHR12.</text>
</comment>
<evidence type="ECO:0000255" key="1">
    <source>
        <dbReference type="PROSITE-ProRule" id="PRU00448"/>
    </source>
</evidence>
<evidence type="ECO:0000269" key="2">
    <source>
    </source>
</evidence>
<evidence type="ECO:0000269" key="3">
    <source>
    </source>
</evidence>
<evidence type="ECO:0000303" key="4">
    <source>
    </source>
</evidence>
<evidence type="ECO:0000305" key="5"/>
<evidence type="ECO:0000312" key="6">
    <source>
        <dbReference type="Araport" id="AT4G27280"/>
    </source>
</evidence>
<evidence type="ECO:0000312" key="7">
    <source>
        <dbReference type="EMBL" id="CAA19722.1"/>
    </source>
</evidence>
<accession>O81831</accession>
<dbReference type="EMBL" id="AY363867">
    <property type="protein sequence ID" value="AAR16085.1"/>
    <property type="molecule type" value="mRNA"/>
</dbReference>
<dbReference type="EMBL" id="AL030978">
    <property type="protein sequence ID" value="CAA19722.1"/>
    <property type="molecule type" value="Genomic_DNA"/>
</dbReference>
<dbReference type="EMBL" id="AL161566">
    <property type="protein sequence ID" value="CAB79583.1"/>
    <property type="molecule type" value="Genomic_DNA"/>
</dbReference>
<dbReference type="EMBL" id="CP002687">
    <property type="protein sequence ID" value="AEE85320.1"/>
    <property type="molecule type" value="Genomic_DNA"/>
</dbReference>
<dbReference type="EMBL" id="AY058165">
    <property type="protein sequence ID" value="AAL25579.1"/>
    <property type="molecule type" value="mRNA"/>
</dbReference>
<dbReference type="EMBL" id="AY098973">
    <property type="protein sequence ID" value="AAM19983.1"/>
    <property type="molecule type" value="mRNA"/>
</dbReference>
<dbReference type="EMBL" id="AY085115">
    <property type="protein sequence ID" value="AAM61669.1"/>
    <property type="molecule type" value="mRNA"/>
</dbReference>
<dbReference type="PIR" id="T05752">
    <property type="entry name" value="T05752"/>
</dbReference>
<dbReference type="RefSeq" id="NP_194458.1">
    <property type="nucleotide sequence ID" value="NM_118862.3"/>
</dbReference>
<dbReference type="SMR" id="O81831"/>
<dbReference type="FunCoup" id="O81831">
    <property type="interactions" value="34"/>
</dbReference>
<dbReference type="IntAct" id="O81831">
    <property type="interactions" value="1"/>
</dbReference>
<dbReference type="STRING" id="3702.O81831"/>
<dbReference type="iPTMnet" id="O81831"/>
<dbReference type="PaxDb" id="3702-AT4G27280.1"/>
<dbReference type="ProteomicsDB" id="223925"/>
<dbReference type="EnsemblPlants" id="AT4G27280.1">
    <property type="protein sequence ID" value="AT4G27280.1"/>
    <property type="gene ID" value="AT4G27280"/>
</dbReference>
<dbReference type="GeneID" id="828836"/>
<dbReference type="Gramene" id="AT4G27280.1">
    <property type="protein sequence ID" value="AT4G27280.1"/>
    <property type="gene ID" value="AT4G27280"/>
</dbReference>
<dbReference type="KEGG" id="ath:AT4G27280"/>
<dbReference type="Araport" id="AT4G27280"/>
<dbReference type="TAIR" id="AT4G27280">
    <property type="gene designation" value="CMI1"/>
</dbReference>
<dbReference type="eggNOG" id="KOG0028">
    <property type="taxonomic scope" value="Eukaryota"/>
</dbReference>
<dbReference type="HOGENOM" id="CLU_137017_1_0_1"/>
<dbReference type="InParanoid" id="O81831"/>
<dbReference type="OMA" id="RCMIKEG"/>
<dbReference type="OrthoDB" id="343296at2759"/>
<dbReference type="PhylomeDB" id="O81831"/>
<dbReference type="PRO" id="PR:O81831"/>
<dbReference type="Proteomes" id="UP000006548">
    <property type="component" value="Chromosome 4"/>
</dbReference>
<dbReference type="ExpressionAtlas" id="O81831">
    <property type="expression patterns" value="baseline and differential"/>
</dbReference>
<dbReference type="GO" id="GO:0005509">
    <property type="term" value="F:calcium ion binding"/>
    <property type="evidence" value="ECO:0007669"/>
    <property type="project" value="InterPro"/>
</dbReference>
<dbReference type="GO" id="GO:0071456">
    <property type="term" value="P:cellular response to hypoxia"/>
    <property type="evidence" value="ECO:0007007"/>
    <property type="project" value="TAIR"/>
</dbReference>
<dbReference type="GO" id="GO:0009733">
    <property type="term" value="P:response to auxin"/>
    <property type="evidence" value="ECO:0000314"/>
    <property type="project" value="TAIR"/>
</dbReference>
<dbReference type="FunFam" id="1.10.238.10:FF:000335">
    <property type="entry name" value="Calcium-binding protein KIC"/>
    <property type="match status" value="1"/>
</dbReference>
<dbReference type="Gene3D" id="1.10.238.10">
    <property type="entry name" value="EF-hand"/>
    <property type="match status" value="1"/>
</dbReference>
<dbReference type="InterPro" id="IPR011992">
    <property type="entry name" value="EF-hand-dom_pair"/>
</dbReference>
<dbReference type="InterPro" id="IPR018247">
    <property type="entry name" value="EF_Hand_1_Ca_BS"/>
</dbReference>
<dbReference type="InterPro" id="IPR002048">
    <property type="entry name" value="EF_hand_dom"/>
</dbReference>
<dbReference type="InterPro" id="IPR044205">
    <property type="entry name" value="KIC/PBP1/KRP1"/>
</dbReference>
<dbReference type="PANTHER" id="PTHR47319">
    <property type="entry name" value="CALCIUM-BINDING PROTEIN KIC"/>
    <property type="match status" value="1"/>
</dbReference>
<dbReference type="PANTHER" id="PTHR47319:SF29">
    <property type="entry name" value="CALCIUM-BINDING PROTEIN KRP1"/>
    <property type="match status" value="1"/>
</dbReference>
<dbReference type="Pfam" id="PF13833">
    <property type="entry name" value="EF-hand_8"/>
    <property type="match status" value="1"/>
</dbReference>
<dbReference type="SUPFAM" id="SSF47473">
    <property type="entry name" value="EF-hand"/>
    <property type="match status" value="1"/>
</dbReference>
<dbReference type="PROSITE" id="PS00018">
    <property type="entry name" value="EF_HAND_1"/>
    <property type="match status" value="1"/>
</dbReference>
<dbReference type="PROSITE" id="PS50222">
    <property type="entry name" value="EF_HAND_2"/>
    <property type="match status" value="1"/>
</dbReference>
<organism>
    <name type="scientific">Arabidopsis thaliana</name>
    <name type="common">Mouse-ear cress</name>
    <dbReference type="NCBI Taxonomy" id="3702"/>
    <lineage>
        <taxon>Eukaryota</taxon>
        <taxon>Viridiplantae</taxon>
        <taxon>Streptophyta</taxon>
        <taxon>Embryophyta</taxon>
        <taxon>Tracheophyta</taxon>
        <taxon>Spermatophyta</taxon>
        <taxon>Magnoliopsida</taxon>
        <taxon>eudicotyledons</taxon>
        <taxon>Gunneridae</taxon>
        <taxon>Pentapetalae</taxon>
        <taxon>rosids</taxon>
        <taxon>malvids</taxon>
        <taxon>Brassicales</taxon>
        <taxon>Brassicaceae</taxon>
        <taxon>Camelineae</taxon>
        <taxon>Arabidopsis</taxon>
    </lineage>
</organism>
<sequence length="130" mass="14503">MASPKSPTRPTQQNPQPNFHDFLPTMAGNLGGEGLIGELCNGFELLMDREKGVITFESLRRNAAAVLGLGDLTDEDVRCMIKEGDFDCDGALNQMEFCVLMFRLSPDLMEASRCLVTEVIEEEFGFTRRH</sequence>
<proteinExistence type="evidence at transcript level"/>
<gene>
    <name evidence="4" type="primary">KRP1</name>
    <name evidence="6" type="ordered locus">At4g27280</name>
    <name evidence="7" type="ORF">M4I22.90</name>
</gene>
<name>CARP1_ARATH</name>